<feature type="chain" id="PRO_0000023117" description="Aspartate 1-decarboxylase beta chain" evidence="1">
    <location>
        <begin position="1"/>
        <end position="24"/>
    </location>
</feature>
<feature type="chain" id="PRO_0000023118" description="Aspartate 1-decarboxylase alpha chain" evidence="1">
    <location>
        <begin position="25"/>
        <end position="142"/>
    </location>
</feature>
<feature type="active site" description="Schiff-base intermediate with substrate; via pyruvic acid" evidence="1">
    <location>
        <position position="25"/>
    </location>
</feature>
<feature type="active site" description="Proton donor" evidence="1">
    <location>
        <position position="58"/>
    </location>
</feature>
<feature type="binding site" evidence="1">
    <location>
        <position position="57"/>
    </location>
    <ligand>
        <name>substrate</name>
    </ligand>
</feature>
<feature type="binding site" evidence="1">
    <location>
        <begin position="73"/>
        <end position="75"/>
    </location>
    <ligand>
        <name>substrate</name>
    </ligand>
</feature>
<feature type="modified residue" description="Pyruvic acid (Ser)" evidence="1">
    <location>
        <position position="25"/>
    </location>
</feature>
<gene>
    <name evidence="1" type="primary">panD</name>
    <name type="ordered locus">ML0231</name>
</gene>
<protein>
    <recommendedName>
        <fullName evidence="1">Aspartate 1-decarboxylase</fullName>
        <ecNumber evidence="1">4.1.1.11</ecNumber>
    </recommendedName>
    <alternativeName>
        <fullName evidence="1">Aspartate alpha-decarboxylase</fullName>
    </alternativeName>
    <component>
        <recommendedName>
            <fullName evidence="1">Aspartate 1-decarboxylase beta chain</fullName>
        </recommendedName>
    </component>
    <component>
        <recommendedName>
            <fullName evidence="1">Aspartate 1-decarboxylase alpha chain</fullName>
        </recommendedName>
    </component>
</protein>
<name>PAND_MYCLE</name>
<accession>Q9CD57</accession>
<proteinExistence type="inferred from homology"/>
<evidence type="ECO:0000255" key="1">
    <source>
        <dbReference type="HAMAP-Rule" id="MF_00446"/>
    </source>
</evidence>
<keyword id="KW-0068">Autocatalytic cleavage</keyword>
<keyword id="KW-0963">Cytoplasm</keyword>
<keyword id="KW-0210">Decarboxylase</keyword>
<keyword id="KW-0456">Lyase</keyword>
<keyword id="KW-0566">Pantothenate biosynthesis</keyword>
<keyword id="KW-0670">Pyruvate</keyword>
<keyword id="KW-1185">Reference proteome</keyword>
<keyword id="KW-0704">Schiff base</keyword>
<keyword id="KW-0865">Zymogen</keyword>
<comment type="function">
    <text evidence="1">Catalyzes the pyruvoyl-dependent decarboxylation of aspartate to produce beta-alanine.</text>
</comment>
<comment type="catalytic activity">
    <reaction evidence="1">
        <text>L-aspartate + H(+) = beta-alanine + CO2</text>
        <dbReference type="Rhea" id="RHEA:19497"/>
        <dbReference type="ChEBI" id="CHEBI:15378"/>
        <dbReference type="ChEBI" id="CHEBI:16526"/>
        <dbReference type="ChEBI" id="CHEBI:29991"/>
        <dbReference type="ChEBI" id="CHEBI:57966"/>
        <dbReference type="EC" id="4.1.1.11"/>
    </reaction>
</comment>
<comment type="cofactor">
    <cofactor evidence="1">
        <name>pyruvate</name>
        <dbReference type="ChEBI" id="CHEBI:15361"/>
    </cofactor>
    <text evidence="1">Binds 1 pyruvoyl group covalently per subunit.</text>
</comment>
<comment type="pathway">
    <text evidence="1">Cofactor biosynthesis; (R)-pantothenate biosynthesis; beta-alanine from L-aspartate: step 1/1.</text>
</comment>
<comment type="subunit">
    <text evidence="1">Heterooctamer of four alpha and four beta subunits.</text>
</comment>
<comment type="subcellular location">
    <subcellularLocation>
        <location evidence="1">Cytoplasm</location>
    </subcellularLocation>
</comment>
<comment type="PTM">
    <text evidence="1">Is synthesized initially as an inactive proenzyme, which is activated by self-cleavage at a specific serine bond to produce a beta-subunit with a hydroxyl group at its C-terminus and an alpha-subunit with a pyruvoyl group at its N-terminus.</text>
</comment>
<comment type="similarity">
    <text evidence="1">Belongs to the PanD family.</text>
</comment>
<reference key="1">
    <citation type="journal article" date="2001" name="Nature">
        <title>Massive gene decay in the leprosy bacillus.</title>
        <authorList>
            <person name="Cole S.T."/>
            <person name="Eiglmeier K."/>
            <person name="Parkhill J."/>
            <person name="James K.D."/>
            <person name="Thomson N.R."/>
            <person name="Wheeler P.R."/>
            <person name="Honore N."/>
            <person name="Garnier T."/>
            <person name="Churcher C.M."/>
            <person name="Harris D.E."/>
            <person name="Mungall K.L."/>
            <person name="Basham D."/>
            <person name="Brown D."/>
            <person name="Chillingworth T."/>
            <person name="Connor R."/>
            <person name="Davies R.M."/>
            <person name="Devlin K."/>
            <person name="Duthoy S."/>
            <person name="Feltwell T."/>
            <person name="Fraser A."/>
            <person name="Hamlin N."/>
            <person name="Holroyd S."/>
            <person name="Hornsby T."/>
            <person name="Jagels K."/>
            <person name="Lacroix C."/>
            <person name="Maclean J."/>
            <person name="Moule S."/>
            <person name="Murphy L.D."/>
            <person name="Oliver K."/>
            <person name="Quail M.A."/>
            <person name="Rajandream M.A."/>
            <person name="Rutherford K.M."/>
            <person name="Rutter S."/>
            <person name="Seeger K."/>
            <person name="Simon S."/>
            <person name="Simmonds M."/>
            <person name="Skelton J."/>
            <person name="Squares R."/>
            <person name="Squares S."/>
            <person name="Stevens K."/>
            <person name="Taylor K."/>
            <person name="Whitehead S."/>
            <person name="Woodward J.R."/>
            <person name="Barrell B.G."/>
        </authorList>
    </citation>
    <scope>NUCLEOTIDE SEQUENCE [LARGE SCALE GENOMIC DNA]</scope>
    <source>
        <strain>TN</strain>
    </source>
</reference>
<dbReference type="EC" id="4.1.1.11" evidence="1"/>
<dbReference type="EMBL" id="AL583917">
    <property type="protein sequence ID" value="CAC29739.1"/>
    <property type="molecule type" value="Genomic_DNA"/>
</dbReference>
<dbReference type="PIR" id="G86937">
    <property type="entry name" value="G86937"/>
</dbReference>
<dbReference type="RefSeq" id="NP_301291.1">
    <property type="nucleotide sequence ID" value="NC_002677.1"/>
</dbReference>
<dbReference type="RefSeq" id="WP_010907615.1">
    <property type="nucleotide sequence ID" value="NC_002677.1"/>
</dbReference>
<dbReference type="SMR" id="Q9CD57"/>
<dbReference type="STRING" id="272631.gene:17574048"/>
<dbReference type="KEGG" id="mle:ML0231"/>
<dbReference type="PATRIC" id="fig|272631.5.peg.364"/>
<dbReference type="Leproma" id="ML0231"/>
<dbReference type="eggNOG" id="COG0853">
    <property type="taxonomic scope" value="Bacteria"/>
</dbReference>
<dbReference type="HOGENOM" id="CLU_115305_2_0_11"/>
<dbReference type="OrthoDB" id="9803983at2"/>
<dbReference type="UniPathway" id="UPA00028">
    <property type="reaction ID" value="UER00002"/>
</dbReference>
<dbReference type="Proteomes" id="UP000000806">
    <property type="component" value="Chromosome"/>
</dbReference>
<dbReference type="GO" id="GO:0005829">
    <property type="term" value="C:cytosol"/>
    <property type="evidence" value="ECO:0007669"/>
    <property type="project" value="TreeGrafter"/>
</dbReference>
<dbReference type="GO" id="GO:0004068">
    <property type="term" value="F:aspartate 1-decarboxylase activity"/>
    <property type="evidence" value="ECO:0007669"/>
    <property type="project" value="UniProtKB-UniRule"/>
</dbReference>
<dbReference type="GO" id="GO:0006523">
    <property type="term" value="P:alanine biosynthetic process"/>
    <property type="evidence" value="ECO:0007669"/>
    <property type="project" value="InterPro"/>
</dbReference>
<dbReference type="GO" id="GO:0015940">
    <property type="term" value="P:pantothenate biosynthetic process"/>
    <property type="evidence" value="ECO:0007669"/>
    <property type="project" value="UniProtKB-UniRule"/>
</dbReference>
<dbReference type="CDD" id="cd06919">
    <property type="entry name" value="Asp_decarbox"/>
    <property type="match status" value="1"/>
</dbReference>
<dbReference type="Gene3D" id="2.40.40.20">
    <property type="match status" value="1"/>
</dbReference>
<dbReference type="HAMAP" id="MF_00446">
    <property type="entry name" value="PanD"/>
    <property type="match status" value="1"/>
</dbReference>
<dbReference type="InterPro" id="IPR009010">
    <property type="entry name" value="Asp_de-COase-like_dom_sf"/>
</dbReference>
<dbReference type="InterPro" id="IPR003190">
    <property type="entry name" value="Asp_decarbox"/>
</dbReference>
<dbReference type="NCBIfam" id="TIGR00223">
    <property type="entry name" value="panD"/>
    <property type="match status" value="1"/>
</dbReference>
<dbReference type="PANTHER" id="PTHR21012">
    <property type="entry name" value="ASPARTATE 1-DECARBOXYLASE"/>
    <property type="match status" value="1"/>
</dbReference>
<dbReference type="PANTHER" id="PTHR21012:SF0">
    <property type="entry name" value="ASPARTATE 1-DECARBOXYLASE"/>
    <property type="match status" value="1"/>
</dbReference>
<dbReference type="Pfam" id="PF02261">
    <property type="entry name" value="Asp_decarbox"/>
    <property type="match status" value="1"/>
</dbReference>
<dbReference type="PIRSF" id="PIRSF006246">
    <property type="entry name" value="Asp_decarbox"/>
    <property type="match status" value="1"/>
</dbReference>
<dbReference type="SUPFAM" id="SSF50692">
    <property type="entry name" value="ADC-like"/>
    <property type="match status" value="1"/>
</dbReference>
<sequence>MLRTMLKSKIHRATVTQAYLHYVGSVTIDADLMGAADLLEGEQVTIVDINNGARLVTYAIAGERGTGVIGINGAAAHLVHPGDLVILISYGTMEDAEAHAYQPRIVFVDADNKPIDLGHDPGSVPLDISVAAELFDPRIGAR</sequence>
<organism>
    <name type="scientific">Mycobacterium leprae (strain TN)</name>
    <dbReference type="NCBI Taxonomy" id="272631"/>
    <lineage>
        <taxon>Bacteria</taxon>
        <taxon>Bacillati</taxon>
        <taxon>Actinomycetota</taxon>
        <taxon>Actinomycetes</taxon>
        <taxon>Mycobacteriales</taxon>
        <taxon>Mycobacteriaceae</taxon>
        <taxon>Mycobacterium</taxon>
    </lineage>
</organism>